<dbReference type="EMBL" id="CU928163">
    <property type="protein sequence ID" value="CAR14239.1"/>
    <property type="molecule type" value="Genomic_DNA"/>
</dbReference>
<dbReference type="RefSeq" id="WP_000517476.1">
    <property type="nucleotide sequence ID" value="NC_011751.1"/>
</dbReference>
<dbReference type="RefSeq" id="YP_002413761.1">
    <property type="nucleotide sequence ID" value="NC_011751.1"/>
</dbReference>
<dbReference type="SMR" id="B7N6X8"/>
<dbReference type="STRING" id="585056.ECUMN_3072"/>
<dbReference type="GeneID" id="93779258"/>
<dbReference type="KEGG" id="eum:ECUMN_3072"/>
<dbReference type="PATRIC" id="fig|585056.7.peg.3248"/>
<dbReference type="HOGENOM" id="CLU_134863_5_2_6"/>
<dbReference type="Proteomes" id="UP000007097">
    <property type="component" value="Chromosome"/>
</dbReference>
<dbReference type="GO" id="GO:0032153">
    <property type="term" value="C:cell division site"/>
    <property type="evidence" value="ECO:0007669"/>
    <property type="project" value="UniProtKB-UniRule"/>
</dbReference>
<dbReference type="GO" id="GO:0030428">
    <property type="term" value="C:cell septum"/>
    <property type="evidence" value="ECO:0007669"/>
    <property type="project" value="TreeGrafter"/>
</dbReference>
<dbReference type="GO" id="GO:0005886">
    <property type="term" value="C:plasma membrane"/>
    <property type="evidence" value="ECO:0007669"/>
    <property type="project" value="UniProtKB-SubCell"/>
</dbReference>
<dbReference type="GO" id="GO:0043093">
    <property type="term" value="P:FtsZ-dependent cytokinesis"/>
    <property type="evidence" value="ECO:0007669"/>
    <property type="project" value="UniProtKB-UniRule"/>
</dbReference>
<dbReference type="FunFam" id="1.20.5.400:FF:000001">
    <property type="entry name" value="Cell division protein FtsB"/>
    <property type="match status" value="1"/>
</dbReference>
<dbReference type="Gene3D" id="1.20.5.400">
    <property type="match status" value="1"/>
</dbReference>
<dbReference type="HAMAP" id="MF_00599">
    <property type="entry name" value="FtsB"/>
    <property type="match status" value="1"/>
</dbReference>
<dbReference type="InterPro" id="IPR023081">
    <property type="entry name" value="Cell_div_FtsB"/>
</dbReference>
<dbReference type="InterPro" id="IPR007060">
    <property type="entry name" value="FtsL/DivIC"/>
</dbReference>
<dbReference type="NCBIfam" id="NF002058">
    <property type="entry name" value="PRK00888.1"/>
    <property type="match status" value="1"/>
</dbReference>
<dbReference type="PANTHER" id="PTHR37485">
    <property type="entry name" value="CELL DIVISION PROTEIN FTSB"/>
    <property type="match status" value="1"/>
</dbReference>
<dbReference type="PANTHER" id="PTHR37485:SF1">
    <property type="entry name" value="CELL DIVISION PROTEIN FTSB"/>
    <property type="match status" value="1"/>
</dbReference>
<dbReference type="Pfam" id="PF04977">
    <property type="entry name" value="DivIC"/>
    <property type="match status" value="1"/>
</dbReference>
<sequence>MGKLTLLLLAILVWLQYSLWFGKNGIHDYTRVNDDVAAQQATNAKLKARNDQLFAEIDDLNGGQEALEERARNELSMTRPGETFYRLVPDASKRAQSAGQNNR</sequence>
<gene>
    <name evidence="1" type="primary">ftsB</name>
    <name type="ordered locus">ECUMN_3072</name>
</gene>
<organism>
    <name type="scientific">Escherichia coli O17:K52:H18 (strain UMN026 / ExPEC)</name>
    <dbReference type="NCBI Taxonomy" id="585056"/>
    <lineage>
        <taxon>Bacteria</taxon>
        <taxon>Pseudomonadati</taxon>
        <taxon>Pseudomonadota</taxon>
        <taxon>Gammaproteobacteria</taxon>
        <taxon>Enterobacterales</taxon>
        <taxon>Enterobacteriaceae</taxon>
        <taxon>Escherichia</taxon>
    </lineage>
</organism>
<evidence type="ECO:0000255" key="1">
    <source>
        <dbReference type="HAMAP-Rule" id="MF_00599"/>
    </source>
</evidence>
<accession>B7N6X8</accession>
<keyword id="KW-0131">Cell cycle</keyword>
<keyword id="KW-0132">Cell division</keyword>
<keyword id="KW-0997">Cell inner membrane</keyword>
<keyword id="KW-1003">Cell membrane</keyword>
<keyword id="KW-0175">Coiled coil</keyword>
<keyword id="KW-0472">Membrane</keyword>
<keyword id="KW-0812">Transmembrane</keyword>
<keyword id="KW-1133">Transmembrane helix</keyword>
<reference key="1">
    <citation type="journal article" date="2009" name="PLoS Genet.">
        <title>Organised genome dynamics in the Escherichia coli species results in highly diverse adaptive paths.</title>
        <authorList>
            <person name="Touchon M."/>
            <person name="Hoede C."/>
            <person name="Tenaillon O."/>
            <person name="Barbe V."/>
            <person name="Baeriswyl S."/>
            <person name="Bidet P."/>
            <person name="Bingen E."/>
            <person name="Bonacorsi S."/>
            <person name="Bouchier C."/>
            <person name="Bouvet O."/>
            <person name="Calteau A."/>
            <person name="Chiapello H."/>
            <person name="Clermont O."/>
            <person name="Cruveiller S."/>
            <person name="Danchin A."/>
            <person name="Diard M."/>
            <person name="Dossat C."/>
            <person name="Karoui M.E."/>
            <person name="Frapy E."/>
            <person name="Garry L."/>
            <person name="Ghigo J.M."/>
            <person name="Gilles A.M."/>
            <person name="Johnson J."/>
            <person name="Le Bouguenec C."/>
            <person name="Lescat M."/>
            <person name="Mangenot S."/>
            <person name="Martinez-Jehanne V."/>
            <person name="Matic I."/>
            <person name="Nassif X."/>
            <person name="Oztas S."/>
            <person name="Petit M.A."/>
            <person name="Pichon C."/>
            <person name="Rouy Z."/>
            <person name="Ruf C.S."/>
            <person name="Schneider D."/>
            <person name="Tourret J."/>
            <person name="Vacherie B."/>
            <person name="Vallenet D."/>
            <person name="Medigue C."/>
            <person name="Rocha E.P.C."/>
            <person name="Denamur E."/>
        </authorList>
    </citation>
    <scope>NUCLEOTIDE SEQUENCE [LARGE SCALE GENOMIC DNA]</scope>
    <source>
        <strain>UMN026 / ExPEC</strain>
    </source>
</reference>
<name>FTSB_ECOLU</name>
<protein>
    <recommendedName>
        <fullName evidence="1">Cell division protein FtsB</fullName>
    </recommendedName>
</protein>
<proteinExistence type="inferred from homology"/>
<comment type="function">
    <text evidence="1">Essential cell division protein. May link together the upstream cell division proteins, which are predominantly cytoplasmic, with the downstream cell division proteins, which are predominantly periplasmic.</text>
</comment>
<comment type="subunit">
    <text evidence="1">Part of a complex composed of FtsB, FtsL and FtsQ.</text>
</comment>
<comment type="subcellular location">
    <subcellularLocation>
        <location evidence="1">Cell inner membrane</location>
        <topology evidence="1">Single-pass type II membrane protein</topology>
    </subcellularLocation>
    <text evidence="1">Localizes to the division septum.</text>
</comment>
<comment type="similarity">
    <text evidence="1">Belongs to the FtsB family.</text>
</comment>
<feature type="chain" id="PRO_1000129927" description="Cell division protein FtsB">
    <location>
        <begin position="1"/>
        <end position="103"/>
    </location>
</feature>
<feature type="topological domain" description="Cytoplasmic" evidence="1">
    <location>
        <begin position="1"/>
        <end position="3"/>
    </location>
</feature>
<feature type="transmembrane region" description="Helical" evidence="1">
    <location>
        <begin position="4"/>
        <end position="21"/>
    </location>
</feature>
<feature type="topological domain" description="Periplasmic" evidence="1">
    <location>
        <begin position="22"/>
        <end position="103"/>
    </location>
</feature>
<feature type="coiled-coil region" evidence="1">
    <location>
        <begin position="31"/>
        <end position="71"/>
    </location>
</feature>